<gene>
    <name evidence="1" type="primary">ndk</name>
    <name type="ordered locus">BWG_2282</name>
</gene>
<reference key="1">
    <citation type="journal article" date="2009" name="J. Bacteriol.">
        <title>Genomic sequencing reveals regulatory mutations and recombinational events in the widely used MC4100 lineage of Escherichia coli K-12.</title>
        <authorList>
            <person name="Ferenci T."/>
            <person name="Zhou Z."/>
            <person name="Betteridge T."/>
            <person name="Ren Y."/>
            <person name="Liu Y."/>
            <person name="Feng L."/>
            <person name="Reeves P.R."/>
            <person name="Wang L."/>
        </authorList>
    </citation>
    <scope>NUCLEOTIDE SEQUENCE [LARGE SCALE GENOMIC DNA]</scope>
    <source>
        <strain>K12 / MC4100 / BW2952</strain>
    </source>
</reference>
<keyword id="KW-0067">ATP-binding</keyword>
<keyword id="KW-0963">Cytoplasm</keyword>
<keyword id="KW-0418">Kinase</keyword>
<keyword id="KW-0460">Magnesium</keyword>
<keyword id="KW-0479">Metal-binding</keyword>
<keyword id="KW-0546">Nucleotide metabolism</keyword>
<keyword id="KW-0547">Nucleotide-binding</keyword>
<keyword id="KW-0597">Phosphoprotein</keyword>
<keyword id="KW-0808">Transferase</keyword>
<feature type="chain" id="PRO_1000206209" description="Nucleoside diphosphate kinase">
    <location>
        <begin position="1"/>
        <end position="143"/>
    </location>
</feature>
<feature type="active site" description="Pros-phosphohistidine intermediate" evidence="1">
    <location>
        <position position="117"/>
    </location>
</feature>
<feature type="binding site" evidence="1">
    <location>
        <position position="11"/>
    </location>
    <ligand>
        <name>ATP</name>
        <dbReference type="ChEBI" id="CHEBI:30616"/>
    </ligand>
</feature>
<feature type="binding site" evidence="1">
    <location>
        <position position="59"/>
    </location>
    <ligand>
        <name>ATP</name>
        <dbReference type="ChEBI" id="CHEBI:30616"/>
    </ligand>
</feature>
<feature type="binding site" evidence="1">
    <location>
        <position position="87"/>
    </location>
    <ligand>
        <name>ATP</name>
        <dbReference type="ChEBI" id="CHEBI:30616"/>
    </ligand>
</feature>
<feature type="binding site" evidence="1">
    <location>
        <position position="93"/>
    </location>
    <ligand>
        <name>ATP</name>
        <dbReference type="ChEBI" id="CHEBI:30616"/>
    </ligand>
</feature>
<feature type="binding site" evidence="1">
    <location>
        <position position="104"/>
    </location>
    <ligand>
        <name>ATP</name>
        <dbReference type="ChEBI" id="CHEBI:30616"/>
    </ligand>
</feature>
<feature type="binding site" evidence="1">
    <location>
        <position position="114"/>
    </location>
    <ligand>
        <name>ATP</name>
        <dbReference type="ChEBI" id="CHEBI:30616"/>
    </ligand>
</feature>
<protein>
    <recommendedName>
        <fullName evidence="1">Nucleoside diphosphate kinase</fullName>
        <shortName evidence="1">NDK</shortName>
        <shortName evidence="1">NDP kinase</shortName>
        <ecNumber evidence="1">2.7.4.6</ecNumber>
    </recommendedName>
    <alternativeName>
        <fullName evidence="1">Nucleoside-2-P kinase</fullName>
    </alternativeName>
</protein>
<dbReference type="EC" id="2.7.4.6" evidence="1"/>
<dbReference type="EMBL" id="CP001396">
    <property type="protein sequence ID" value="ACR63827.1"/>
    <property type="molecule type" value="Genomic_DNA"/>
</dbReference>
<dbReference type="RefSeq" id="WP_000963837.1">
    <property type="nucleotide sequence ID" value="NC_012759.1"/>
</dbReference>
<dbReference type="SMR" id="C4ZX93"/>
<dbReference type="GeneID" id="93774618"/>
<dbReference type="KEGG" id="ebw:BWG_2282"/>
<dbReference type="HOGENOM" id="CLU_060216_8_1_6"/>
<dbReference type="GO" id="GO:0005737">
    <property type="term" value="C:cytoplasm"/>
    <property type="evidence" value="ECO:0007669"/>
    <property type="project" value="UniProtKB-SubCell"/>
</dbReference>
<dbReference type="GO" id="GO:0005524">
    <property type="term" value="F:ATP binding"/>
    <property type="evidence" value="ECO:0007669"/>
    <property type="project" value="UniProtKB-UniRule"/>
</dbReference>
<dbReference type="GO" id="GO:0046872">
    <property type="term" value="F:metal ion binding"/>
    <property type="evidence" value="ECO:0007669"/>
    <property type="project" value="UniProtKB-KW"/>
</dbReference>
<dbReference type="GO" id="GO:0004550">
    <property type="term" value="F:nucleoside diphosphate kinase activity"/>
    <property type="evidence" value="ECO:0007669"/>
    <property type="project" value="UniProtKB-UniRule"/>
</dbReference>
<dbReference type="GO" id="GO:0006241">
    <property type="term" value="P:CTP biosynthetic process"/>
    <property type="evidence" value="ECO:0007669"/>
    <property type="project" value="UniProtKB-UniRule"/>
</dbReference>
<dbReference type="GO" id="GO:0006183">
    <property type="term" value="P:GTP biosynthetic process"/>
    <property type="evidence" value="ECO:0007669"/>
    <property type="project" value="UniProtKB-UniRule"/>
</dbReference>
<dbReference type="GO" id="GO:0006228">
    <property type="term" value="P:UTP biosynthetic process"/>
    <property type="evidence" value="ECO:0007669"/>
    <property type="project" value="UniProtKB-UniRule"/>
</dbReference>
<dbReference type="CDD" id="cd04413">
    <property type="entry name" value="NDPk_I"/>
    <property type="match status" value="1"/>
</dbReference>
<dbReference type="FunFam" id="3.30.70.141:FF:000001">
    <property type="entry name" value="Nucleoside diphosphate kinase"/>
    <property type="match status" value="1"/>
</dbReference>
<dbReference type="Gene3D" id="3.30.70.141">
    <property type="entry name" value="Nucleoside diphosphate kinase-like domain"/>
    <property type="match status" value="1"/>
</dbReference>
<dbReference type="HAMAP" id="MF_00451">
    <property type="entry name" value="NDP_kinase"/>
    <property type="match status" value="1"/>
</dbReference>
<dbReference type="InterPro" id="IPR034907">
    <property type="entry name" value="NDK-like_dom"/>
</dbReference>
<dbReference type="InterPro" id="IPR036850">
    <property type="entry name" value="NDK-like_dom_sf"/>
</dbReference>
<dbReference type="InterPro" id="IPR001564">
    <property type="entry name" value="Nucleoside_diP_kinase"/>
</dbReference>
<dbReference type="InterPro" id="IPR023005">
    <property type="entry name" value="Nucleoside_diP_kinase_AS"/>
</dbReference>
<dbReference type="NCBIfam" id="NF001908">
    <property type="entry name" value="PRK00668.1"/>
    <property type="match status" value="1"/>
</dbReference>
<dbReference type="PANTHER" id="PTHR46161">
    <property type="entry name" value="NUCLEOSIDE DIPHOSPHATE KINASE"/>
    <property type="match status" value="1"/>
</dbReference>
<dbReference type="PANTHER" id="PTHR46161:SF3">
    <property type="entry name" value="NUCLEOSIDE DIPHOSPHATE KINASE DDB_G0292928-RELATED"/>
    <property type="match status" value="1"/>
</dbReference>
<dbReference type="Pfam" id="PF00334">
    <property type="entry name" value="NDK"/>
    <property type="match status" value="1"/>
</dbReference>
<dbReference type="PRINTS" id="PR01243">
    <property type="entry name" value="NUCDPKINASE"/>
</dbReference>
<dbReference type="SMART" id="SM00562">
    <property type="entry name" value="NDK"/>
    <property type="match status" value="1"/>
</dbReference>
<dbReference type="SUPFAM" id="SSF54919">
    <property type="entry name" value="Nucleoside diphosphate kinase, NDK"/>
    <property type="match status" value="1"/>
</dbReference>
<dbReference type="PROSITE" id="PS00469">
    <property type="entry name" value="NDPK"/>
    <property type="match status" value="1"/>
</dbReference>
<dbReference type="PROSITE" id="PS51374">
    <property type="entry name" value="NDPK_LIKE"/>
    <property type="match status" value="1"/>
</dbReference>
<organism>
    <name type="scientific">Escherichia coli (strain K12 / MC4100 / BW2952)</name>
    <dbReference type="NCBI Taxonomy" id="595496"/>
    <lineage>
        <taxon>Bacteria</taxon>
        <taxon>Pseudomonadati</taxon>
        <taxon>Pseudomonadota</taxon>
        <taxon>Gammaproteobacteria</taxon>
        <taxon>Enterobacterales</taxon>
        <taxon>Enterobacteriaceae</taxon>
        <taxon>Escherichia</taxon>
    </lineage>
</organism>
<comment type="function">
    <text evidence="1">Major role in the synthesis of nucleoside triphosphates other than ATP. The ATP gamma phosphate is transferred to the NDP beta phosphate via a ping-pong mechanism, using a phosphorylated active-site intermediate.</text>
</comment>
<comment type="catalytic activity">
    <reaction evidence="1">
        <text>a 2'-deoxyribonucleoside 5'-diphosphate + ATP = a 2'-deoxyribonucleoside 5'-triphosphate + ADP</text>
        <dbReference type="Rhea" id="RHEA:44640"/>
        <dbReference type="ChEBI" id="CHEBI:30616"/>
        <dbReference type="ChEBI" id="CHEBI:61560"/>
        <dbReference type="ChEBI" id="CHEBI:73316"/>
        <dbReference type="ChEBI" id="CHEBI:456216"/>
        <dbReference type="EC" id="2.7.4.6"/>
    </reaction>
</comment>
<comment type="catalytic activity">
    <reaction evidence="1">
        <text>a ribonucleoside 5'-diphosphate + ATP = a ribonucleoside 5'-triphosphate + ADP</text>
        <dbReference type="Rhea" id="RHEA:18113"/>
        <dbReference type="ChEBI" id="CHEBI:30616"/>
        <dbReference type="ChEBI" id="CHEBI:57930"/>
        <dbReference type="ChEBI" id="CHEBI:61557"/>
        <dbReference type="ChEBI" id="CHEBI:456216"/>
        <dbReference type="EC" id="2.7.4.6"/>
    </reaction>
</comment>
<comment type="cofactor">
    <cofactor evidence="1">
        <name>Mg(2+)</name>
        <dbReference type="ChEBI" id="CHEBI:18420"/>
    </cofactor>
</comment>
<comment type="subunit">
    <text evidence="1">Homotetramer.</text>
</comment>
<comment type="subcellular location">
    <subcellularLocation>
        <location evidence="1">Cytoplasm</location>
    </subcellularLocation>
</comment>
<comment type="similarity">
    <text evidence="1">Belongs to the NDK family.</text>
</comment>
<sequence>MAIERTFSIIKPNAVAKNVIGNIFARFEAAGFKIVGTKMLHLTVEQARGFYAEHDGKPFFDGLVEFMTSGPIVVSVLEGENAVQRHRDLLGATNPANALAGTLRADYADSLTENGTHGSDSVESAAREIAYFFGEGEVCPRTR</sequence>
<name>NDK_ECOBW</name>
<evidence type="ECO:0000255" key="1">
    <source>
        <dbReference type="HAMAP-Rule" id="MF_00451"/>
    </source>
</evidence>
<proteinExistence type="inferred from homology"/>
<accession>C4ZX93</accession>